<accession>A1AP46</accession>
<proteinExistence type="inferred from homology"/>
<evidence type="ECO:0000255" key="1">
    <source>
        <dbReference type="HAMAP-Rule" id="MF_01396"/>
    </source>
</evidence>
<gene>
    <name evidence="1" type="primary">atpE2</name>
    <name type="ordered locus">Ppro_1501</name>
</gene>
<organism>
    <name type="scientific">Pelobacter propionicus (strain DSM 2379 / NBRC 103807 / OttBd1)</name>
    <dbReference type="NCBI Taxonomy" id="338966"/>
    <lineage>
        <taxon>Bacteria</taxon>
        <taxon>Pseudomonadati</taxon>
        <taxon>Thermodesulfobacteriota</taxon>
        <taxon>Desulfuromonadia</taxon>
        <taxon>Desulfuromonadales</taxon>
        <taxon>Desulfuromonadaceae</taxon>
        <taxon>Pelobacter</taxon>
    </lineage>
</organism>
<keyword id="KW-0066">ATP synthesis</keyword>
<keyword id="KW-0997">Cell inner membrane</keyword>
<keyword id="KW-1003">Cell membrane</keyword>
<keyword id="KW-0138">CF(0)</keyword>
<keyword id="KW-0375">Hydrogen ion transport</keyword>
<keyword id="KW-0406">Ion transport</keyword>
<keyword id="KW-0446">Lipid-binding</keyword>
<keyword id="KW-0472">Membrane</keyword>
<keyword id="KW-1185">Reference proteome</keyword>
<keyword id="KW-0812">Transmembrane</keyword>
<keyword id="KW-1133">Transmembrane helix</keyword>
<keyword id="KW-0813">Transport</keyword>
<feature type="chain" id="PRO_5000181947" description="ATP synthase subunit c 2">
    <location>
        <begin position="1"/>
        <end position="91"/>
    </location>
</feature>
<feature type="transmembrane region" description="Helical" evidence="1">
    <location>
        <begin position="4"/>
        <end position="24"/>
    </location>
</feature>
<feature type="transmembrane region" description="Helical" evidence="1">
    <location>
        <begin position="53"/>
        <end position="73"/>
    </location>
</feature>
<feature type="site" description="Reversibly protonated during proton transport" evidence="1">
    <location>
        <position position="59"/>
    </location>
</feature>
<reference key="1">
    <citation type="submission" date="2006-10" db="EMBL/GenBank/DDBJ databases">
        <title>Complete sequence of chromosome of Pelobacter propionicus DSM 2379.</title>
        <authorList>
            <consortium name="US DOE Joint Genome Institute"/>
            <person name="Copeland A."/>
            <person name="Lucas S."/>
            <person name="Lapidus A."/>
            <person name="Barry K."/>
            <person name="Detter J.C."/>
            <person name="Glavina del Rio T."/>
            <person name="Hammon N."/>
            <person name="Israni S."/>
            <person name="Dalin E."/>
            <person name="Tice H."/>
            <person name="Pitluck S."/>
            <person name="Saunders E."/>
            <person name="Brettin T."/>
            <person name="Bruce D."/>
            <person name="Han C."/>
            <person name="Tapia R."/>
            <person name="Schmutz J."/>
            <person name="Larimer F."/>
            <person name="Land M."/>
            <person name="Hauser L."/>
            <person name="Kyrpides N."/>
            <person name="Kim E."/>
            <person name="Lovley D."/>
            <person name="Richardson P."/>
        </authorList>
    </citation>
    <scope>NUCLEOTIDE SEQUENCE [LARGE SCALE GENOMIC DNA]</scope>
    <source>
        <strain>DSM 2379 / NBRC 103807 / OttBd1</strain>
    </source>
</reference>
<name>ATPL2_PELPD</name>
<dbReference type="EMBL" id="CP000482">
    <property type="protein sequence ID" value="ABK99116.1"/>
    <property type="molecule type" value="Genomic_DNA"/>
</dbReference>
<dbReference type="RefSeq" id="WP_011735409.1">
    <property type="nucleotide sequence ID" value="NC_008609.1"/>
</dbReference>
<dbReference type="SMR" id="A1AP46"/>
<dbReference type="STRING" id="338966.Ppro_1501"/>
<dbReference type="KEGG" id="ppd:Ppro_1501"/>
<dbReference type="eggNOG" id="COG0636">
    <property type="taxonomic scope" value="Bacteria"/>
</dbReference>
<dbReference type="HOGENOM" id="CLU_148047_2_0_7"/>
<dbReference type="OrthoDB" id="5296711at2"/>
<dbReference type="Proteomes" id="UP000006732">
    <property type="component" value="Chromosome"/>
</dbReference>
<dbReference type="GO" id="GO:0005886">
    <property type="term" value="C:plasma membrane"/>
    <property type="evidence" value="ECO:0007669"/>
    <property type="project" value="UniProtKB-SubCell"/>
</dbReference>
<dbReference type="GO" id="GO:0045259">
    <property type="term" value="C:proton-transporting ATP synthase complex"/>
    <property type="evidence" value="ECO:0007669"/>
    <property type="project" value="UniProtKB-KW"/>
</dbReference>
<dbReference type="GO" id="GO:0033177">
    <property type="term" value="C:proton-transporting two-sector ATPase complex, proton-transporting domain"/>
    <property type="evidence" value="ECO:0007669"/>
    <property type="project" value="InterPro"/>
</dbReference>
<dbReference type="GO" id="GO:0008289">
    <property type="term" value="F:lipid binding"/>
    <property type="evidence" value="ECO:0007669"/>
    <property type="project" value="UniProtKB-KW"/>
</dbReference>
<dbReference type="GO" id="GO:0046933">
    <property type="term" value="F:proton-transporting ATP synthase activity, rotational mechanism"/>
    <property type="evidence" value="ECO:0007669"/>
    <property type="project" value="UniProtKB-UniRule"/>
</dbReference>
<dbReference type="CDD" id="cd18121">
    <property type="entry name" value="ATP-synt_Fo_c"/>
    <property type="match status" value="1"/>
</dbReference>
<dbReference type="Gene3D" id="1.20.120.610">
    <property type="entry name" value="lithium bound rotor ring of v- atpase"/>
    <property type="match status" value="1"/>
</dbReference>
<dbReference type="HAMAP" id="MF_01396">
    <property type="entry name" value="ATP_synth_c_bact"/>
    <property type="match status" value="1"/>
</dbReference>
<dbReference type="InterPro" id="IPR005953">
    <property type="entry name" value="ATP_synth_csu_bac/chlpt"/>
</dbReference>
<dbReference type="InterPro" id="IPR000454">
    <property type="entry name" value="ATP_synth_F0_csu"/>
</dbReference>
<dbReference type="InterPro" id="IPR020537">
    <property type="entry name" value="ATP_synth_F0_csu_DDCD_BS"/>
</dbReference>
<dbReference type="InterPro" id="IPR002379">
    <property type="entry name" value="ATPase_proteolipid_c-like_dom"/>
</dbReference>
<dbReference type="InterPro" id="IPR035921">
    <property type="entry name" value="F/V-ATP_Csub_sf"/>
</dbReference>
<dbReference type="NCBIfam" id="TIGR01260">
    <property type="entry name" value="ATP_synt_c"/>
    <property type="match status" value="1"/>
</dbReference>
<dbReference type="PANTHER" id="PTHR10031">
    <property type="entry name" value="ATP SYNTHASE LIPID-BINDING PROTEIN, MITOCHONDRIAL"/>
    <property type="match status" value="1"/>
</dbReference>
<dbReference type="PANTHER" id="PTHR10031:SF0">
    <property type="entry name" value="ATPASE PROTEIN 9"/>
    <property type="match status" value="1"/>
</dbReference>
<dbReference type="Pfam" id="PF00137">
    <property type="entry name" value="ATP-synt_C"/>
    <property type="match status" value="1"/>
</dbReference>
<dbReference type="PRINTS" id="PR00124">
    <property type="entry name" value="ATPASEC"/>
</dbReference>
<dbReference type="SUPFAM" id="SSF81333">
    <property type="entry name" value="F1F0 ATP synthase subunit C"/>
    <property type="match status" value="1"/>
</dbReference>
<dbReference type="PROSITE" id="PS00605">
    <property type="entry name" value="ATPASE_C"/>
    <property type="match status" value="1"/>
</dbReference>
<sequence length="91" mass="9311">MSFFSMCVLGAAIGMAIGTLGTGIGQGLAVKSAVEGVSRNPGASGKIMTTMMIGLAMIESLAIYALVICLIILFANPYKDIALKLAETVAK</sequence>
<protein>
    <recommendedName>
        <fullName evidence="1">ATP synthase subunit c 2</fullName>
    </recommendedName>
    <alternativeName>
        <fullName evidence="1">ATP synthase F(0) sector subunit c 2</fullName>
    </alternativeName>
    <alternativeName>
        <fullName evidence="1">F-type ATPase subunit c 2</fullName>
        <shortName evidence="1">F-ATPase subunit c 2</shortName>
    </alternativeName>
    <alternativeName>
        <fullName evidence="1">Lipid-binding protein 2</fullName>
    </alternativeName>
</protein>
<comment type="function">
    <text evidence="1">F(1)F(0) ATP synthase produces ATP from ADP in the presence of a proton or sodium gradient. F-type ATPases consist of two structural domains, F(1) containing the extramembraneous catalytic core and F(0) containing the membrane proton channel, linked together by a central stalk and a peripheral stalk. During catalysis, ATP synthesis in the catalytic domain of F(1) is coupled via a rotary mechanism of the central stalk subunits to proton translocation.</text>
</comment>
<comment type="function">
    <text evidence="1">Key component of the F(0) channel; it plays a direct role in translocation across the membrane. A homomeric c-ring of between 10-14 subunits forms the central stalk rotor element with the F(1) delta and epsilon subunits.</text>
</comment>
<comment type="subunit">
    <text evidence="1">F-type ATPases have 2 components, F(1) - the catalytic core - and F(0) - the membrane proton channel. F(1) has five subunits: alpha(3), beta(3), gamma(1), delta(1), epsilon(1). F(0) has three main subunits: a(1), b(2) and c(10-14). The alpha and beta chains form an alternating ring which encloses part of the gamma chain. F(1) is attached to F(0) by a central stalk formed by the gamma and epsilon chains, while a peripheral stalk is formed by the delta and b chains.</text>
</comment>
<comment type="subcellular location">
    <subcellularLocation>
        <location evidence="1">Cell inner membrane</location>
        <topology evidence="1">Multi-pass membrane protein</topology>
    </subcellularLocation>
</comment>
<comment type="similarity">
    <text evidence="1">Belongs to the ATPase C chain family.</text>
</comment>